<accession>Q72F80</accession>
<name>DDL_NITV2</name>
<dbReference type="EC" id="6.3.2.4" evidence="2"/>
<dbReference type="EMBL" id="AE017285">
    <property type="protein sequence ID" value="AAS94817.1"/>
    <property type="molecule type" value="Genomic_DNA"/>
</dbReference>
<dbReference type="RefSeq" id="WP_010937641.1">
    <property type="nucleotide sequence ID" value="NC_002937.3"/>
</dbReference>
<dbReference type="RefSeq" id="YP_009558.1">
    <property type="nucleotide sequence ID" value="NC_002937.3"/>
</dbReference>
<dbReference type="SMR" id="Q72F80"/>
<dbReference type="STRING" id="882.DVU_0334"/>
<dbReference type="PaxDb" id="882-DVU_0334"/>
<dbReference type="EnsemblBacteria" id="AAS94817">
    <property type="protein sequence ID" value="AAS94817"/>
    <property type="gene ID" value="DVU_0334"/>
</dbReference>
<dbReference type="KEGG" id="dvu:DVU_0334"/>
<dbReference type="PATRIC" id="fig|882.5.peg.315"/>
<dbReference type="eggNOG" id="COG1181">
    <property type="taxonomic scope" value="Bacteria"/>
</dbReference>
<dbReference type="HOGENOM" id="CLU_039268_1_1_7"/>
<dbReference type="OrthoDB" id="9813261at2"/>
<dbReference type="PhylomeDB" id="Q72F80"/>
<dbReference type="UniPathway" id="UPA00219"/>
<dbReference type="Proteomes" id="UP000002194">
    <property type="component" value="Chromosome"/>
</dbReference>
<dbReference type="GO" id="GO:0005737">
    <property type="term" value="C:cytoplasm"/>
    <property type="evidence" value="ECO:0007669"/>
    <property type="project" value="UniProtKB-SubCell"/>
</dbReference>
<dbReference type="GO" id="GO:0005524">
    <property type="term" value="F:ATP binding"/>
    <property type="evidence" value="ECO:0007669"/>
    <property type="project" value="UniProtKB-KW"/>
</dbReference>
<dbReference type="GO" id="GO:0008716">
    <property type="term" value="F:D-alanine-D-alanine ligase activity"/>
    <property type="evidence" value="ECO:0007669"/>
    <property type="project" value="UniProtKB-UniRule"/>
</dbReference>
<dbReference type="GO" id="GO:0046872">
    <property type="term" value="F:metal ion binding"/>
    <property type="evidence" value="ECO:0007669"/>
    <property type="project" value="UniProtKB-KW"/>
</dbReference>
<dbReference type="GO" id="GO:0071555">
    <property type="term" value="P:cell wall organization"/>
    <property type="evidence" value="ECO:0007669"/>
    <property type="project" value="UniProtKB-KW"/>
</dbReference>
<dbReference type="GO" id="GO:0009252">
    <property type="term" value="P:peptidoglycan biosynthetic process"/>
    <property type="evidence" value="ECO:0007669"/>
    <property type="project" value="UniProtKB-UniRule"/>
</dbReference>
<dbReference type="GO" id="GO:0008360">
    <property type="term" value="P:regulation of cell shape"/>
    <property type="evidence" value="ECO:0007669"/>
    <property type="project" value="UniProtKB-KW"/>
</dbReference>
<dbReference type="Gene3D" id="3.40.50.20">
    <property type="match status" value="1"/>
</dbReference>
<dbReference type="Gene3D" id="3.30.1490.20">
    <property type="entry name" value="ATP-grasp fold, A domain"/>
    <property type="match status" value="1"/>
</dbReference>
<dbReference type="Gene3D" id="3.30.470.20">
    <property type="entry name" value="ATP-grasp fold, B domain"/>
    <property type="match status" value="1"/>
</dbReference>
<dbReference type="HAMAP" id="MF_00047">
    <property type="entry name" value="Dala_Dala_lig"/>
    <property type="match status" value="1"/>
</dbReference>
<dbReference type="InterPro" id="IPR011761">
    <property type="entry name" value="ATP-grasp"/>
</dbReference>
<dbReference type="InterPro" id="IPR013815">
    <property type="entry name" value="ATP_grasp_subdomain_1"/>
</dbReference>
<dbReference type="InterPro" id="IPR000291">
    <property type="entry name" value="D-Ala_lig_Van_CS"/>
</dbReference>
<dbReference type="InterPro" id="IPR005905">
    <property type="entry name" value="D_ala_D_ala"/>
</dbReference>
<dbReference type="InterPro" id="IPR011095">
    <property type="entry name" value="Dala_Dala_lig_C"/>
</dbReference>
<dbReference type="InterPro" id="IPR016185">
    <property type="entry name" value="PreATP-grasp_dom_sf"/>
</dbReference>
<dbReference type="NCBIfam" id="TIGR01205">
    <property type="entry name" value="D_ala_D_alaTIGR"/>
    <property type="match status" value="1"/>
</dbReference>
<dbReference type="NCBIfam" id="NF002378">
    <property type="entry name" value="PRK01372.1"/>
    <property type="match status" value="1"/>
</dbReference>
<dbReference type="PANTHER" id="PTHR23132">
    <property type="entry name" value="D-ALANINE--D-ALANINE LIGASE"/>
    <property type="match status" value="1"/>
</dbReference>
<dbReference type="PANTHER" id="PTHR23132:SF23">
    <property type="entry name" value="D-ALANINE--D-ALANINE LIGASE B"/>
    <property type="match status" value="1"/>
</dbReference>
<dbReference type="Pfam" id="PF07478">
    <property type="entry name" value="Dala_Dala_lig_C"/>
    <property type="match status" value="1"/>
</dbReference>
<dbReference type="PIRSF" id="PIRSF039102">
    <property type="entry name" value="Ddl/VanB"/>
    <property type="match status" value="1"/>
</dbReference>
<dbReference type="SUPFAM" id="SSF56059">
    <property type="entry name" value="Glutathione synthetase ATP-binding domain-like"/>
    <property type="match status" value="1"/>
</dbReference>
<dbReference type="SUPFAM" id="SSF52440">
    <property type="entry name" value="PreATP-grasp domain"/>
    <property type="match status" value="1"/>
</dbReference>
<dbReference type="PROSITE" id="PS50975">
    <property type="entry name" value="ATP_GRASP"/>
    <property type="match status" value="1"/>
</dbReference>
<dbReference type="PROSITE" id="PS00843">
    <property type="entry name" value="DALA_DALA_LIGASE_1"/>
    <property type="match status" value="1"/>
</dbReference>
<dbReference type="PROSITE" id="PS00844">
    <property type="entry name" value="DALA_DALA_LIGASE_2"/>
    <property type="match status" value="1"/>
</dbReference>
<sequence length="303" mass="31659">MKVLLIAGGWSSERDVSLAGARGIEKALCALGHDVTWFDPATSLDGLLEAASSHDFAFINLHGSPGEDGLVQAMLDTAGCPYQGSGPAGSFLALNKAVSKQLLRRHGILTPDWAFLAARPAADWEPGLGYPLFVKPNTGGSSLCLSRVTQPEGLAPALEAVFAHCGEAIVEPAIPGVEVTCGVLGDTALPPILIRPAEGAFFDYTSKYTPGGATELCPAPLPAEVTAHVQDVTLRAHRLLGLRGYSRADYILRDDGALFLLEVNTLPGMTPTSLVPQEAAAIGLDFPALIARLIELGMTAAGR</sequence>
<feature type="chain" id="PRO_1000030446" description="D-alanine--D-alanine ligase">
    <location>
        <begin position="1"/>
        <end position="303"/>
    </location>
</feature>
<feature type="domain" description="ATP-grasp" evidence="2">
    <location>
        <begin position="100"/>
        <end position="295"/>
    </location>
</feature>
<feature type="binding site" evidence="2">
    <location>
        <begin position="127"/>
        <end position="180"/>
    </location>
    <ligand>
        <name>ATP</name>
        <dbReference type="ChEBI" id="CHEBI:30616"/>
    </ligand>
</feature>
<feature type="binding site" evidence="2">
    <location>
        <position position="249"/>
    </location>
    <ligand>
        <name>Mg(2+)</name>
        <dbReference type="ChEBI" id="CHEBI:18420"/>
        <label>1</label>
    </ligand>
</feature>
<feature type="binding site" evidence="2">
    <location>
        <position position="262"/>
    </location>
    <ligand>
        <name>Mg(2+)</name>
        <dbReference type="ChEBI" id="CHEBI:18420"/>
        <label>1</label>
    </ligand>
</feature>
<feature type="binding site" evidence="2">
    <location>
        <position position="262"/>
    </location>
    <ligand>
        <name>Mg(2+)</name>
        <dbReference type="ChEBI" id="CHEBI:18420"/>
        <label>2</label>
    </ligand>
</feature>
<feature type="binding site" evidence="2">
    <location>
        <position position="264"/>
    </location>
    <ligand>
        <name>Mg(2+)</name>
        <dbReference type="ChEBI" id="CHEBI:18420"/>
        <label>2</label>
    </ligand>
</feature>
<keyword id="KW-0067">ATP-binding</keyword>
<keyword id="KW-0133">Cell shape</keyword>
<keyword id="KW-0961">Cell wall biogenesis/degradation</keyword>
<keyword id="KW-0963">Cytoplasm</keyword>
<keyword id="KW-0436">Ligase</keyword>
<keyword id="KW-0460">Magnesium</keyword>
<keyword id="KW-0464">Manganese</keyword>
<keyword id="KW-0479">Metal-binding</keyword>
<keyword id="KW-0547">Nucleotide-binding</keyword>
<keyword id="KW-0573">Peptidoglycan synthesis</keyword>
<keyword id="KW-1185">Reference proteome</keyword>
<comment type="function">
    <text evidence="2">Cell wall formation.</text>
</comment>
<comment type="catalytic activity">
    <reaction evidence="2">
        <text>2 D-alanine + ATP = D-alanyl-D-alanine + ADP + phosphate + H(+)</text>
        <dbReference type="Rhea" id="RHEA:11224"/>
        <dbReference type="ChEBI" id="CHEBI:15378"/>
        <dbReference type="ChEBI" id="CHEBI:30616"/>
        <dbReference type="ChEBI" id="CHEBI:43474"/>
        <dbReference type="ChEBI" id="CHEBI:57416"/>
        <dbReference type="ChEBI" id="CHEBI:57822"/>
        <dbReference type="ChEBI" id="CHEBI:456216"/>
        <dbReference type="EC" id="6.3.2.4"/>
    </reaction>
</comment>
<comment type="cofactor">
    <cofactor evidence="1">
        <name>Mg(2+)</name>
        <dbReference type="ChEBI" id="CHEBI:18420"/>
    </cofactor>
    <cofactor evidence="1">
        <name>Mn(2+)</name>
        <dbReference type="ChEBI" id="CHEBI:29035"/>
    </cofactor>
    <text evidence="1">Binds 2 magnesium or manganese ions per subunit.</text>
</comment>
<comment type="pathway">
    <text evidence="2">Cell wall biogenesis; peptidoglycan biosynthesis.</text>
</comment>
<comment type="subcellular location">
    <subcellularLocation>
        <location evidence="2">Cytoplasm</location>
    </subcellularLocation>
</comment>
<comment type="similarity">
    <text evidence="2">Belongs to the D-alanine--D-alanine ligase family.</text>
</comment>
<protein>
    <recommendedName>
        <fullName evidence="2">D-alanine--D-alanine ligase</fullName>
        <ecNumber evidence="2">6.3.2.4</ecNumber>
    </recommendedName>
    <alternativeName>
        <fullName evidence="2">D-Ala-D-Ala ligase</fullName>
    </alternativeName>
    <alternativeName>
        <fullName evidence="2">D-alanylalanine synthetase</fullName>
    </alternativeName>
</protein>
<proteinExistence type="inferred from homology"/>
<organism>
    <name type="scientific">Nitratidesulfovibrio vulgaris (strain ATCC 29579 / DSM 644 / CCUG 34227 / NCIMB 8303 / VKM B-1760 / Hildenborough)</name>
    <name type="common">Desulfovibrio vulgaris</name>
    <dbReference type="NCBI Taxonomy" id="882"/>
    <lineage>
        <taxon>Bacteria</taxon>
        <taxon>Pseudomonadati</taxon>
        <taxon>Thermodesulfobacteriota</taxon>
        <taxon>Desulfovibrionia</taxon>
        <taxon>Desulfovibrionales</taxon>
        <taxon>Desulfovibrionaceae</taxon>
        <taxon>Nitratidesulfovibrio</taxon>
    </lineage>
</organism>
<gene>
    <name evidence="2" type="primary">ddl</name>
    <name type="ordered locus">DVU_0334</name>
</gene>
<evidence type="ECO:0000250" key="1"/>
<evidence type="ECO:0000255" key="2">
    <source>
        <dbReference type="HAMAP-Rule" id="MF_00047"/>
    </source>
</evidence>
<reference key="1">
    <citation type="journal article" date="2004" name="Nat. Biotechnol.">
        <title>The genome sequence of the anaerobic, sulfate-reducing bacterium Desulfovibrio vulgaris Hildenborough.</title>
        <authorList>
            <person name="Heidelberg J.F."/>
            <person name="Seshadri R."/>
            <person name="Haveman S.A."/>
            <person name="Hemme C.L."/>
            <person name="Paulsen I.T."/>
            <person name="Kolonay J.F."/>
            <person name="Eisen J.A."/>
            <person name="Ward N.L."/>
            <person name="Methe B.A."/>
            <person name="Brinkac L.M."/>
            <person name="Daugherty S.C."/>
            <person name="DeBoy R.T."/>
            <person name="Dodson R.J."/>
            <person name="Durkin A.S."/>
            <person name="Madupu R."/>
            <person name="Nelson W.C."/>
            <person name="Sullivan S.A."/>
            <person name="Fouts D.E."/>
            <person name="Haft D.H."/>
            <person name="Selengut J."/>
            <person name="Peterson J.D."/>
            <person name="Davidsen T.M."/>
            <person name="Zafar N."/>
            <person name="Zhou L."/>
            <person name="Radune D."/>
            <person name="Dimitrov G."/>
            <person name="Hance M."/>
            <person name="Tran K."/>
            <person name="Khouri H.M."/>
            <person name="Gill J."/>
            <person name="Utterback T.R."/>
            <person name="Feldblyum T.V."/>
            <person name="Wall J.D."/>
            <person name="Voordouw G."/>
            <person name="Fraser C.M."/>
        </authorList>
    </citation>
    <scope>NUCLEOTIDE SEQUENCE [LARGE SCALE GENOMIC DNA]</scope>
    <source>
        <strain>ATCC 29579 / DSM 644 / CCUG 34227 / NCIMB 8303 / VKM B-1760 / Hildenborough</strain>
    </source>
</reference>